<proteinExistence type="inferred from homology"/>
<accession>Q5L203</accession>
<gene>
    <name type="ordered locus">GK0742</name>
</gene>
<evidence type="ECO:0000255" key="1">
    <source>
        <dbReference type="HAMAP-Rule" id="MF_00632"/>
    </source>
</evidence>
<protein>
    <recommendedName>
        <fullName evidence="1">Nucleotide-binding protein GK0742</fullName>
    </recommendedName>
</protein>
<sequence>MSKESSFDIVSKVDLSEVANAINIAMKEIKTRYDFKGSKSDISLEKDELVLISDDEFKLEQLKDVLIGKLIKRGVATKNIQYGKIEPAAGGTVRQRAKLVQGIDKENAKKITTIIKNTGLKVKSQVQDDQIRVSGKSKDDLQKVIAAIREADLPIEVQFVNYR</sequence>
<name>Y742_GEOKA</name>
<comment type="function">
    <text evidence="1">Nucleotide-binding protein.</text>
</comment>
<comment type="similarity">
    <text evidence="1">Belongs to the YajQ family.</text>
</comment>
<reference key="1">
    <citation type="journal article" date="2004" name="Nucleic Acids Res.">
        <title>Thermoadaptation trait revealed by the genome sequence of thermophilic Geobacillus kaustophilus.</title>
        <authorList>
            <person name="Takami H."/>
            <person name="Takaki Y."/>
            <person name="Chee G.-J."/>
            <person name="Nishi S."/>
            <person name="Shimamura S."/>
            <person name="Suzuki H."/>
            <person name="Matsui S."/>
            <person name="Uchiyama I."/>
        </authorList>
    </citation>
    <scope>NUCLEOTIDE SEQUENCE [LARGE SCALE GENOMIC DNA]</scope>
    <source>
        <strain>HTA426</strain>
    </source>
</reference>
<organism>
    <name type="scientific">Geobacillus kaustophilus (strain HTA426)</name>
    <dbReference type="NCBI Taxonomy" id="235909"/>
    <lineage>
        <taxon>Bacteria</taxon>
        <taxon>Bacillati</taxon>
        <taxon>Bacillota</taxon>
        <taxon>Bacilli</taxon>
        <taxon>Bacillales</taxon>
        <taxon>Anoxybacillaceae</taxon>
        <taxon>Geobacillus</taxon>
        <taxon>Geobacillus thermoleovorans group</taxon>
    </lineage>
</organism>
<feature type="chain" id="PRO_0000261938" description="Nucleotide-binding protein GK0742">
    <location>
        <begin position="1"/>
        <end position="163"/>
    </location>
</feature>
<dbReference type="EMBL" id="BA000043">
    <property type="protein sequence ID" value="BAD75027.1"/>
    <property type="molecule type" value="Genomic_DNA"/>
</dbReference>
<dbReference type="RefSeq" id="WP_011230245.1">
    <property type="nucleotide sequence ID" value="NC_006510.1"/>
</dbReference>
<dbReference type="SMR" id="Q5L203"/>
<dbReference type="STRING" id="235909.GK0742"/>
<dbReference type="KEGG" id="gka:GK0742"/>
<dbReference type="eggNOG" id="COG1666">
    <property type="taxonomic scope" value="Bacteria"/>
</dbReference>
<dbReference type="HOGENOM" id="CLU_099839_1_0_9"/>
<dbReference type="Proteomes" id="UP000001172">
    <property type="component" value="Chromosome"/>
</dbReference>
<dbReference type="GO" id="GO:0005829">
    <property type="term" value="C:cytosol"/>
    <property type="evidence" value="ECO:0007669"/>
    <property type="project" value="TreeGrafter"/>
</dbReference>
<dbReference type="GO" id="GO:0000166">
    <property type="term" value="F:nucleotide binding"/>
    <property type="evidence" value="ECO:0007669"/>
    <property type="project" value="TreeGrafter"/>
</dbReference>
<dbReference type="CDD" id="cd11740">
    <property type="entry name" value="YajQ_like"/>
    <property type="match status" value="1"/>
</dbReference>
<dbReference type="FunFam" id="3.30.70.990:FF:000002">
    <property type="entry name" value="UPF0234 protein LEP1GSC067_4943"/>
    <property type="match status" value="1"/>
</dbReference>
<dbReference type="FunFam" id="3.30.70.860:FF:000003">
    <property type="entry name" value="UPF0234 protein YBT020_06460"/>
    <property type="match status" value="1"/>
</dbReference>
<dbReference type="Gene3D" id="3.30.70.860">
    <property type="match status" value="1"/>
</dbReference>
<dbReference type="Gene3D" id="3.30.70.990">
    <property type="entry name" value="YajQ-like, domain 2"/>
    <property type="match status" value="1"/>
</dbReference>
<dbReference type="HAMAP" id="MF_00632">
    <property type="entry name" value="YajQ"/>
    <property type="match status" value="1"/>
</dbReference>
<dbReference type="InterPro" id="IPR007551">
    <property type="entry name" value="DUF520"/>
</dbReference>
<dbReference type="InterPro" id="IPR035571">
    <property type="entry name" value="UPF0234-like_C"/>
</dbReference>
<dbReference type="InterPro" id="IPR035570">
    <property type="entry name" value="UPF0234_N"/>
</dbReference>
<dbReference type="InterPro" id="IPR036183">
    <property type="entry name" value="YajQ-like_sf"/>
</dbReference>
<dbReference type="NCBIfam" id="NF003819">
    <property type="entry name" value="PRK05412.1"/>
    <property type="match status" value="1"/>
</dbReference>
<dbReference type="PANTHER" id="PTHR30476">
    <property type="entry name" value="UPF0234 PROTEIN YAJQ"/>
    <property type="match status" value="1"/>
</dbReference>
<dbReference type="PANTHER" id="PTHR30476:SF0">
    <property type="entry name" value="UPF0234 PROTEIN YAJQ"/>
    <property type="match status" value="1"/>
</dbReference>
<dbReference type="Pfam" id="PF04461">
    <property type="entry name" value="DUF520"/>
    <property type="match status" value="1"/>
</dbReference>
<dbReference type="SUPFAM" id="SSF89963">
    <property type="entry name" value="YajQ-like"/>
    <property type="match status" value="2"/>
</dbReference>
<keyword id="KW-0547">Nucleotide-binding</keyword>
<keyword id="KW-1185">Reference proteome</keyword>